<comment type="function">
    <text evidence="1">Catalyzes the conversion of glucosamine-6-phosphate to glucosamine-1-phosphate.</text>
</comment>
<comment type="catalytic activity">
    <reaction evidence="1">
        <text>alpha-D-glucosamine 1-phosphate = D-glucosamine 6-phosphate</text>
        <dbReference type="Rhea" id="RHEA:23424"/>
        <dbReference type="ChEBI" id="CHEBI:58516"/>
        <dbReference type="ChEBI" id="CHEBI:58725"/>
        <dbReference type="EC" id="5.4.2.10"/>
    </reaction>
</comment>
<comment type="cofactor">
    <cofactor evidence="1">
        <name>Mg(2+)</name>
        <dbReference type="ChEBI" id="CHEBI:18420"/>
    </cofactor>
    <text evidence="1">Binds 1 Mg(2+) ion per subunit.</text>
</comment>
<comment type="PTM">
    <text evidence="1">Activated by phosphorylation.</text>
</comment>
<comment type="similarity">
    <text evidence="1">Belongs to the phosphohexose mutase family.</text>
</comment>
<name>GLMM_THEP1</name>
<gene>
    <name evidence="1" type="primary">glmM</name>
    <name type="ordered locus">Tpet_0740</name>
</gene>
<organism>
    <name type="scientific">Thermotoga petrophila (strain ATCC BAA-488 / DSM 13995 / JCM 10881 / RKU-1)</name>
    <dbReference type="NCBI Taxonomy" id="390874"/>
    <lineage>
        <taxon>Bacteria</taxon>
        <taxon>Thermotogati</taxon>
        <taxon>Thermotogota</taxon>
        <taxon>Thermotogae</taxon>
        <taxon>Thermotogales</taxon>
        <taxon>Thermotogaceae</taxon>
        <taxon>Thermotoga</taxon>
    </lineage>
</organism>
<proteinExistence type="inferred from homology"/>
<protein>
    <recommendedName>
        <fullName evidence="1">Phosphoglucosamine mutase</fullName>
        <ecNumber evidence="1">5.4.2.10</ecNumber>
    </recommendedName>
</protein>
<sequence length="429" mass="46934">MRVKYFGTDGIRGVFGETLTDELAFKVGKALGEIVGEGRVIVGKDTRVSGDSLEAAISAGLTSMGVDVLLCGVLPTPAVALLTRITRSFGVVISASHNPPEYNGIKVLKGGYKIPDEMEVKIEEKIESGYFPVRSVVGRTKSFREGRDMYIGAVLEIFRDLDLTGEMVSLDLANGATTTTAKEVFEFLGAKVEVFNDSQDGLLINQGCGATHPRFLAEEMKNGKVGFTFDGDGDRVIAVDEERNVVNGDRIIGILAVGLKEEGRLNSDTVVGTVMTNGGLEDFLKERGIKLLRTKVGDKYVLEKMIESGANLGGERSGHIIILDRSTTGDGLITALELMRVLRRSGRNLSDFAKEIPDYPQITKNVRRTERMSLENENLRKIVEESTSRGYRVVIRPSGTEPVVRITVEGKDREEIEKIVEEISRVLES</sequence>
<keyword id="KW-0413">Isomerase</keyword>
<keyword id="KW-0460">Magnesium</keyword>
<keyword id="KW-0479">Metal-binding</keyword>
<keyword id="KW-0597">Phosphoprotein</keyword>
<dbReference type="EC" id="5.4.2.10" evidence="1"/>
<dbReference type="EMBL" id="CP000702">
    <property type="protein sequence ID" value="ABQ46759.1"/>
    <property type="molecule type" value="Genomic_DNA"/>
</dbReference>
<dbReference type="RefSeq" id="WP_011943340.1">
    <property type="nucleotide sequence ID" value="NC_009486.1"/>
</dbReference>
<dbReference type="SMR" id="A5IKN6"/>
<dbReference type="STRING" id="390874.Tpet_0740"/>
<dbReference type="KEGG" id="tpt:Tpet_0740"/>
<dbReference type="eggNOG" id="COG1109">
    <property type="taxonomic scope" value="Bacteria"/>
</dbReference>
<dbReference type="HOGENOM" id="CLU_016950_7_0_0"/>
<dbReference type="Proteomes" id="UP000006558">
    <property type="component" value="Chromosome"/>
</dbReference>
<dbReference type="GO" id="GO:0005829">
    <property type="term" value="C:cytosol"/>
    <property type="evidence" value="ECO:0007669"/>
    <property type="project" value="TreeGrafter"/>
</dbReference>
<dbReference type="GO" id="GO:0000287">
    <property type="term" value="F:magnesium ion binding"/>
    <property type="evidence" value="ECO:0007669"/>
    <property type="project" value="UniProtKB-UniRule"/>
</dbReference>
<dbReference type="GO" id="GO:0008966">
    <property type="term" value="F:phosphoglucosamine mutase activity"/>
    <property type="evidence" value="ECO:0007669"/>
    <property type="project" value="UniProtKB-UniRule"/>
</dbReference>
<dbReference type="GO" id="GO:0004615">
    <property type="term" value="F:phosphomannomutase activity"/>
    <property type="evidence" value="ECO:0007669"/>
    <property type="project" value="TreeGrafter"/>
</dbReference>
<dbReference type="GO" id="GO:0005975">
    <property type="term" value="P:carbohydrate metabolic process"/>
    <property type="evidence" value="ECO:0007669"/>
    <property type="project" value="InterPro"/>
</dbReference>
<dbReference type="GO" id="GO:0009252">
    <property type="term" value="P:peptidoglycan biosynthetic process"/>
    <property type="evidence" value="ECO:0007669"/>
    <property type="project" value="TreeGrafter"/>
</dbReference>
<dbReference type="GO" id="GO:0006048">
    <property type="term" value="P:UDP-N-acetylglucosamine biosynthetic process"/>
    <property type="evidence" value="ECO:0007669"/>
    <property type="project" value="TreeGrafter"/>
</dbReference>
<dbReference type="CDD" id="cd05802">
    <property type="entry name" value="GlmM"/>
    <property type="match status" value="1"/>
</dbReference>
<dbReference type="FunFam" id="3.40.120.10:FF:000001">
    <property type="entry name" value="Phosphoglucosamine mutase"/>
    <property type="match status" value="1"/>
</dbReference>
<dbReference type="FunFam" id="3.40.120.10:FF:000002">
    <property type="entry name" value="Phosphoglucosamine mutase"/>
    <property type="match status" value="1"/>
</dbReference>
<dbReference type="Gene3D" id="3.40.120.10">
    <property type="entry name" value="Alpha-D-Glucose-1,6-Bisphosphate, subunit A, domain 3"/>
    <property type="match status" value="3"/>
</dbReference>
<dbReference type="Gene3D" id="3.30.310.50">
    <property type="entry name" value="Alpha-D-phosphohexomutase, C-terminal domain"/>
    <property type="match status" value="1"/>
</dbReference>
<dbReference type="HAMAP" id="MF_01554_B">
    <property type="entry name" value="GlmM_B"/>
    <property type="match status" value="1"/>
</dbReference>
<dbReference type="InterPro" id="IPR005844">
    <property type="entry name" value="A-D-PHexomutase_a/b/a-I"/>
</dbReference>
<dbReference type="InterPro" id="IPR016055">
    <property type="entry name" value="A-D-PHexomutase_a/b/a-I/II/III"/>
</dbReference>
<dbReference type="InterPro" id="IPR005845">
    <property type="entry name" value="A-D-PHexomutase_a/b/a-II"/>
</dbReference>
<dbReference type="InterPro" id="IPR005846">
    <property type="entry name" value="A-D-PHexomutase_a/b/a-III"/>
</dbReference>
<dbReference type="InterPro" id="IPR005843">
    <property type="entry name" value="A-D-PHexomutase_C"/>
</dbReference>
<dbReference type="InterPro" id="IPR036900">
    <property type="entry name" value="A-D-PHexomutase_C_sf"/>
</dbReference>
<dbReference type="InterPro" id="IPR016066">
    <property type="entry name" value="A-D-PHexomutase_CS"/>
</dbReference>
<dbReference type="InterPro" id="IPR005841">
    <property type="entry name" value="Alpha-D-phosphohexomutase_SF"/>
</dbReference>
<dbReference type="InterPro" id="IPR006352">
    <property type="entry name" value="GlmM_bact"/>
</dbReference>
<dbReference type="InterPro" id="IPR050060">
    <property type="entry name" value="Phosphoglucosamine_mutase"/>
</dbReference>
<dbReference type="NCBIfam" id="TIGR01455">
    <property type="entry name" value="glmM"/>
    <property type="match status" value="1"/>
</dbReference>
<dbReference type="PANTHER" id="PTHR42946:SF1">
    <property type="entry name" value="PHOSPHOGLUCOMUTASE (ALPHA-D-GLUCOSE-1,6-BISPHOSPHATE-DEPENDENT)"/>
    <property type="match status" value="1"/>
</dbReference>
<dbReference type="PANTHER" id="PTHR42946">
    <property type="entry name" value="PHOSPHOHEXOSE MUTASE"/>
    <property type="match status" value="1"/>
</dbReference>
<dbReference type="Pfam" id="PF02878">
    <property type="entry name" value="PGM_PMM_I"/>
    <property type="match status" value="1"/>
</dbReference>
<dbReference type="Pfam" id="PF02879">
    <property type="entry name" value="PGM_PMM_II"/>
    <property type="match status" value="1"/>
</dbReference>
<dbReference type="Pfam" id="PF02880">
    <property type="entry name" value="PGM_PMM_III"/>
    <property type="match status" value="1"/>
</dbReference>
<dbReference type="Pfam" id="PF00408">
    <property type="entry name" value="PGM_PMM_IV"/>
    <property type="match status" value="1"/>
</dbReference>
<dbReference type="PRINTS" id="PR00509">
    <property type="entry name" value="PGMPMM"/>
</dbReference>
<dbReference type="SUPFAM" id="SSF55957">
    <property type="entry name" value="Phosphoglucomutase, C-terminal domain"/>
    <property type="match status" value="1"/>
</dbReference>
<dbReference type="SUPFAM" id="SSF53738">
    <property type="entry name" value="Phosphoglucomutase, first 3 domains"/>
    <property type="match status" value="3"/>
</dbReference>
<dbReference type="PROSITE" id="PS00710">
    <property type="entry name" value="PGM_PMM"/>
    <property type="match status" value="1"/>
</dbReference>
<feature type="chain" id="PRO_1000068919" description="Phosphoglucosamine mutase">
    <location>
        <begin position="1"/>
        <end position="429"/>
    </location>
</feature>
<feature type="active site" description="Phosphoserine intermediate" evidence="1">
    <location>
        <position position="96"/>
    </location>
</feature>
<feature type="binding site" description="via phosphate group" evidence="1">
    <location>
        <position position="96"/>
    </location>
    <ligand>
        <name>Mg(2+)</name>
        <dbReference type="ChEBI" id="CHEBI:18420"/>
    </ligand>
</feature>
<feature type="binding site" evidence="1">
    <location>
        <position position="230"/>
    </location>
    <ligand>
        <name>Mg(2+)</name>
        <dbReference type="ChEBI" id="CHEBI:18420"/>
    </ligand>
</feature>
<feature type="binding site" evidence="1">
    <location>
        <position position="232"/>
    </location>
    <ligand>
        <name>Mg(2+)</name>
        <dbReference type="ChEBI" id="CHEBI:18420"/>
    </ligand>
</feature>
<feature type="binding site" evidence="1">
    <location>
        <position position="234"/>
    </location>
    <ligand>
        <name>Mg(2+)</name>
        <dbReference type="ChEBI" id="CHEBI:18420"/>
    </ligand>
</feature>
<feature type="modified residue" description="Phosphoserine" evidence="1">
    <location>
        <position position="96"/>
    </location>
</feature>
<accession>A5IKN6</accession>
<reference key="1">
    <citation type="submission" date="2007-05" db="EMBL/GenBank/DDBJ databases">
        <title>Complete sequence of Thermotoga petrophila RKU-1.</title>
        <authorList>
            <consortium name="US DOE Joint Genome Institute"/>
            <person name="Copeland A."/>
            <person name="Lucas S."/>
            <person name="Lapidus A."/>
            <person name="Barry K."/>
            <person name="Glavina del Rio T."/>
            <person name="Dalin E."/>
            <person name="Tice H."/>
            <person name="Pitluck S."/>
            <person name="Sims D."/>
            <person name="Brettin T."/>
            <person name="Bruce D."/>
            <person name="Detter J.C."/>
            <person name="Han C."/>
            <person name="Tapia R."/>
            <person name="Schmutz J."/>
            <person name="Larimer F."/>
            <person name="Land M."/>
            <person name="Hauser L."/>
            <person name="Kyrpides N."/>
            <person name="Mikhailova N."/>
            <person name="Nelson K."/>
            <person name="Gogarten J.P."/>
            <person name="Noll K."/>
            <person name="Richardson P."/>
        </authorList>
    </citation>
    <scope>NUCLEOTIDE SEQUENCE [LARGE SCALE GENOMIC DNA]</scope>
    <source>
        <strain>ATCC BAA-488 / DSM 13995 / JCM 10881 / RKU-1</strain>
    </source>
</reference>
<evidence type="ECO:0000255" key="1">
    <source>
        <dbReference type="HAMAP-Rule" id="MF_01554"/>
    </source>
</evidence>